<organism>
    <name type="scientific">Bacillus caldotenax</name>
    <dbReference type="NCBI Taxonomy" id="1395"/>
    <lineage>
        <taxon>Bacteria</taxon>
        <taxon>Bacillati</taxon>
        <taxon>Bacillota</taxon>
        <taxon>Bacilli</taxon>
        <taxon>Bacillales</taxon>
        <taxon>Anoxybacillaceae</taxon>
        <taxon>Geobacillus</taxon>
        <taxon>Geobacillus thermoleovorans group</taxon>
    </lineage>
</organism>
<accession>P05644</accession>
<keyword id="KW-0028">Amino-acid biosynthesis</keyword>
<keyword id="KW-0100">Branched-chain amino acid biosynthesis</keyword>
<keyword id="KW-0963">Cytoplasm</keyword>
<keyword id="KW-0432">Leucine biosynthesis</keyword>
<keyword id="KW-0460">Magnesium</keyword>
<keyword id="KW-0464">Manganese</keyword>
<keyword id="KW-0479">Metal-binding</keyword>
<keyword id="KW-0520">NAD</keyword>
<keyword id="KW-0560">Oxidoreductase</keyword>
<evidence type="ECO:0000250" key="1"/>
<evidence type="ECO:0000305" key="2"/>
<sequence length="366" mass="39636">MGNYRIAVLPGDGIGKEVTSGAVEVLKAVGIRFGHEFTFEYGLIGGAAIDEAGTPLPEETVRLCRESDAVLLGAVGGPKWDDNPPHLRPEKGLLAIRKQLDLYANLRPVVCYDSLVSRSPLKPDLVQGVDFVIVRELTGGIYFGQPSAVVENGEEKAVDTLLYKKEEIERIVRMAFELARGRRKKVTSVDKANVLSSSRLWREVAEEVANEFPDVTLEHMLVDMRMQLIRAPKQFDVIVTENMFGDILSDEASMLSGSLGMLPSASLSASGPSLYEPVHGSAPDIAGMNKANPIAAILSAAMMLRLSFGLTAEAGGRARVWQALALGSGSRLGQRRPHLSTNEMVEEIKAAVLDYTAIAQIMTVYA</sequence>
<comment type="function">
    <text evidence="1">Catalyzes the oxidation of 3-carboxy-2-hydroxy-4-methylpentanoate (3-isopropylmalate) to 3-carboxy-4-methyl-2-oxopentanoate. The product decarboxylates to 4-methyl-2 oxopentanoate (By similarity).</text>
</comment>
<comment type="catalytic activity">
    <reaction>
        <text>(2R,3S)-3-isopropylmalate + NAD(+) = 4-methyl-2-oxopentanoate + CO2 + NADH</text>
        <dbReference type="Rhea" id="RHEA:32271"/>
        <dbReference type="ChEBI" id="CHEBI:16526"/>
        <dbReference type="ChEBI" id="CHEBI:17865"/>
        <dbReference type="ChEBI" id="CHEBI:35121"/>
        <dbReference type="ChEBI" id="CHEBI:57540"/>
        <dbReference type="ChEBI" id="CHEBI:57945"/>
        <dbReference type="EC" id="1.1.1.85"/>
    </reaction>
</comment>
<comment type="cofactor">
    <cofactor evidence="1">
        <name>Mg(2+)</name>
        <dbReference type="ChEBI" id="CHEBI:18420"/>
    </cofactor>
    <cofactor evidence="1">
        <name>Mn(2+)</name>
        <dbReference type="ChEBI" id="CHEBI:29035"/>
    </cofactor>
    <text evidence="1">Binds 1 Mg(2+) or Mn(2+) ion per subunit.</text>
</comment>
<comment type="pathway">
    <text>Amino-acid biosynthesis; L-leucine biosynthesis; L-leucine from 3-methyl-2-oxobutanoate: step 3/4.</text>
</comment>
<comment type="subunit">
    <text evidence="1">Homodimer.</text>
</comment>
<comment type="subcellular location">
    <subcellularLocation>
        <location evidence="1">Cytoplasm</location>
    </subcellularLocation>
</comment>
<comment type="similarity">
    <text evidence="2">Belongs to the isocitrate and isopropylmalate dehydrogenases family. LeuB type 1 subfamily.</text>
</comment>
<reference key="1">
    <citation type="journal article" date="1987" name="Nucleic Acids Res.">
        <title>The nucleotide sequence of 3-isopropylmalate dehydrogenase gene from Bacillus caldotenax.</title>
        <authorList>
            <person name="Sekiguchi T."/>
            <person name="Suda M."/>
            <person name="Ishii T."/>
            <person name="Nosoh Y."/>
            <person name="Tsuda K."/>
        </authorList>
    </citation>
    <scope>NUCLEOTIDE SEQUENCE [GENOMIC DNA]</scope>
</reference>
<name>LEU3_BACCA</name>
<feature type="chain" id="PRO_0000083633" description="3-isopropylmalate dehydrogenase">
    <location>
        <begin position="1"/>
        <end position="366"/>
    </location>
</feature>
<feature type="binding site" evidence="1">
    <location>
        <begin position="77"/>
        <end position="90"/>
    </location>
    <ligand>
        <name>NAD(+)</name>
        <dbReference type="ChEBI" id="CHEBI:57540"/>
    </ligand>
</feature>
<feature type="binding site" evidence="1">
    <location>
        <position position="97"/>
    </location>
    <ligand>
        <name>substrate</name>
    </ligand>
</feature>
<feature type="binding site" evidence="1">
    <location>
        <position position="107"/>
    </location>
    <ligand>
        <name>substrate</name>
    </ligand>
</feature>
<feature type="binding site" evidence="1">
    <location>
        <position position="135"/>
    </location>
    <ligand>
        <name>substrate</name>
    </ligand>
</feature>
<feature type="binding site" evidence="1">
    <location>
        <position position="223"/>
    </location>
    <ligand>
        <name>Mg(2+)</name>
        <dbReference type="ChEBI" id="CHEBI:18420"/>
    </ligand>
</feature>
<feature type="binding site" evidence="1">
    <location>
        <position position="223"/>
    </location>
    <ligand>
        <name>substrate</name>
    </ligand>
</feature>
<feature type="binding site" evidence="1">
    <location>
        <position position="246"/>
    </location>
    <ligand>
        <name>Mg(2+)</name>
        <dbReference type="ChEBI" id="CHEBI:18420"/>
    </ligand>
</feature>
<feature type="binding site" evidence="1">
    <location>
        <position position="250"/>
    </location>
    <ligand>
        <name>Mg(2+)</name>
        <dbReference type="ChEBI" id="CHEBI:18420"/>
    </ligand>
</feature>
<feature type="binding site" evidence="1">
    <location>
        <begin position="280"/>
        <end position="292"/>
    </location>
    <ligand>
        <name>NAD(+)</name>
        <dbReference type="ChEBI" id="CHEBI:57540"/>
    </ligand>
</feature>
<feature type="site" description="Important for catalysis" evidence="1">
    <location>
        <position position="142"/>
    </location>
</feature>
<feature type="site" description="Important for catalysis" evidence="1">
    <location>
        <position position="191"/>
    </location>
</feature>
<gene>
    <name type="primary">leuB</name>
</gene>
<dbReference type="EC" id="1.1.1.85"/>
<dbReference type="EMBL" id="X04762">
    <property type="protein sequence ID" value="CAA28455.1"/>
    <property type="molecule type" value="Genomic_DNA"/>
</dbReference>
<dbReference type="PIR" id="A26447">
    <property type="entry name" value="A26447"/>
</dbReference>
<dbReference type="SMR" id="P05644"/>
<dbReference type="UniPathway" id="UPA00048">
    <property type="reaction ID" value="UER00072"/>
</dbReference>
<dbReference type="GO" id="GO:0005829">
    <property type="term" value="C:cytosol"/>
    <property type="evidence" value="ECO:0007669"/>
    <property type="project" value="TreeGrafter"/>
</dbReference>
<dbReference type="GO" id="GO:0003862">
    <property type="term" value="F:3-isopropylmalate dehydrogenase activity"/>
    <property type="evidence" value="ECO:0007669"/>
    <property type="project" value="UniProtKB-UniRule"/>
</dbReference>
<dbReference type="GO" id="GO:0000287">
    <property type="term" value="F:magnesium ion binding"/>
    <property type="evidence" value="ECO:0007669"/>
    <property type="project" value="InterPro"/>
</dbReference>
<dbReference type="GO" id="GO:0051287">
    <property type="term" value="F:NAD binding"/>
    <property type="evidence" value="ECO:0007669"/>
    <property type="project" value="InterPro"/>
</dbReference>
<dbReference type="GO" id="GO:0009098">
    <property type="term" value="P:L-leucine biosynthetic process"/>
    <property type="evidence" value="ECO:0007669"/>
    <property type="project" value="UniProtKB-UniRule"/>
</dbReference>
<dbReference type="FunFam" id="3.40.718.10:FF:000028">
    <property type="entry name" value="3-isopropylmalate dehydrogenase"/>
    <property type="match status" value="1"/>
</dbReference>
<dbReference type="Gene3D" id="3.40.718.10">
    <property type="entry name" value="Isopropylmalate Dehydrogenase"/>
    <property type="match status" value="1"/>
</dbReference>
<dbReference type="HAMAP" id="MF_01033">
    <property type="entry name" value="LeuB_type1"/>
    <property type="match status" value="1"/>
</dbReference>
<dbReference type="InterPro" id="IPR019818">
    <property type="entry name" value="IsoCit/isopropylmalate_DH_CS"/>
</dbReference>
<dbReference type="InterPro" id="IPR024084">
    <property type="entry name" value="IsoPropMal-DH-like_dom"/>
</dbReference>
<dbReference type="InterPro" id="IPR004429">
    <property type="entry name" value="Isopropylmalate_DH"/>
</dbReference>
<dbReference type="NCBIfam" id="TIGR00169">
    <property type="entry name" value="leuB"/>
    <property type="match status" value="1"/>
</dbReference>
<dbReference type="PANTHER" id="PTHR42979">
    <property type="entry name" value="3-ISOPROPYLMALATE DEHYDROGENASE"/>
    <property type="match status" value="1"/>
</dbReference>
<dbReference type="PANTHER" id="PTHR42979:SF1">
    <property type="entry name" value="3-ISOPROPYLMALATE DEHYDROGENASE"/>
    <property type="match status" value="1"/>
</dbReference>
<dbReference type="Pfam" id="PF00180">
    <property type="entry name" value="Iso_dh"/>
    <property type="match status" value="1"/>
</dbReference>
<dbReference type="SMART" id="SM01329">
    <property type="entry name" value="Iso_dh"/>
    <property type="match status" value="1"/>
</dbReference>
<dbReference type="SUPFAM" id="SSF53659">
    <property type="entry name" value="Isocitrate/Isopropylmalate dehydrogenase-like"/>
    <property type="match status" value="1"/>
</dbReference>
<dbReference type="PROSITE" id="PS00470">
    <property type="entry name" value="IDH_IMDH"/>
    <property type="match status" value="1"/>
</dbReference>
<protein>
    <recommendedName>
        <fullName>3-isopropylmalate dehydrogenase</fullName>
        <ecNumber>1.1.1.85</ecNumber>
    </recommendedName>
    <alternativeName>
        <fullName>3-IPM-DH</fullName>
    </alternativeName>
    <alternativeName>
        <fullName>Beta-IPM dehydrogenase</fullName>
        <shortName>IMDH</shortName>
    </alternativeName>
</protein>
<proteinExistence type="inferred from homology"/>